<sequence>MIQTLVNFFRTKEVRNKIFFTLAMLVIFKIGTYIPAPGVNPAAFDNPQGSQGATELLNTFGGGALKRFSIFAMGIVPYITASIVMQLLQMDIVPKFSEWAKQGEVGRRKLNNVTRYLAISLAFIQSIGMAFQFNNYLKGALIINQSIMSYLLIALVLTAGTAFLIWLGDQITQFGVGNGISIIIFAGILSTLPASLIQFGQTAFVGQEDTSLAWLKVLGLLVSLILLTVGAIYVLEAVRKIPIQYAKKQTAQRLGSQATYLPLKVNSAGVIPVIFAMAFFLLPRTLTLFYPDKEWAQNIANAANPSSNVGMVVYIVLIILFTYFYAFVQVNPEKMADNLKKQGSYVPGIRPGEQTKKYITKVLYRLTFVGSIFLAVISILPILATKFMGLPQSIQIGGTSLLIVIGVAIETMKSLEAQVSQKEYKGFGGR</sequence>
<comment type="function">
    <text evidence="1">The central subunit of the protein translocation channel SecYEG. Consists of two halves formed by TMs 1-5 and 6-10. These two domains form a lateral gate at the front which open onto the bilayer between TMs 2 and 7, and are clamped together by SecE at the back. The channel is closed by both a pore ring composed of hydrophobic SecY resides and a short helix (helix 2A) on the extracellular side of the membrane which forms a plug. The plug probably moves laterally to allow the channel to open. The ring and the pore may move independently.</text>
</comment>
<comment type="subunit">
    <text evidence="1">Component of the Sec protein translocase complex. Heterotrimer consisting of SecY, SecE and SecG subunits. The heterotrimers can form oligomers, although 1 heterotrimer is thought to be able to translocate proteins. Interacts with the ribosome. Interacts with SecDF, and other proteins may be involved. Interacts with SecA.</text>
</comment>
<comment type="subcellular location">
    <subcellularLocation>
        <location evidence="1">Cell membrane</location>
        <topology evidence="1">Multi-pass membrane protein</topology>
    </subcellularLocation>
</comment>
<comment type="similarity">
    <text evidence="1">Belongs to the SecY/SEC61-alpha family.</text>
</comment>
<comment type="sequence caution" evidence="2">
    <conflict type="frameshift">
        <sequence resource="EMBL-CDS" id="AAB54022"/>
    </conflict>
</comment>
<dbReference type="EMBL" id="U96620">
    <property type="protein sequence ID" value="AAB54022.1"/>
    <property type="status" value="ALT_FRAME"/>
    <property type="molecule type" value="Genomic_DNA"/>
</dbReference>
<dbReference type="EMBL" id="CP000253">
    <property type="protein sequence ID" value="ABD31510.1"/>
    <property type="molecule type" value="Genomic_DNA"/>
</dbReference>
<dbReference type="RefSeq" id="WP_000616784.1">
    <property type="nucleotide sequence ID" value="NZ_LS483365.1"/>
</dbReference>
<dbReference type="RefSeq" id="YP_500959.1">
    <property type="nucleotide sequence ID" value="NC_007795.1"/>
</dbReference>
<dbReference type="SMR" id="O08387"/>
<dbReference type="STRING" id="93061.SAOUHSC_02491"/>
<dbReference type="PaxDb" id="1280-SAXN108_2480"/>
<dbReference type="GeneID" id="3920868"/>
<dbReference type="KEGG" id="sao:SAOUHSC_02491"/>
<dbReference type="PATRIC" id="fig|93061.5.peg.2247"/>
<dbReference type="eggNOG" id="COG0201">
    <property type="taxonomic scope" value="Bacteria"/>
</dbReference>
<dbReference type="HOGENOM" id="CLU_030313_0_1_9"/>
<dbReference type="OrthoDB" id="9809248at2"/>
<dbReference type="PRO" id="PR:O08387"/>
<dbReference type="Proteomes" id="UP000008816">
    <property type="component" value="Chromosome"/>
</dbReference>
<dbReference type="GO" id="GO:0031522">
    <property type="term" value="C:cell envelope Sec protein transport complex"/>
    <property type="evidence" value="ECO:0000318"/>
    <property type="project" value="GO_Central"/>
</dbReference>
<dbReference type="GO" id="GO:0005886">
    <property type="term" value="C:plasma membrane"/>
    <property type="evidence" value="ECO:0000318"/>
    <property type="project" value="GO_Central"/>
</dbReference>
<dbReference type="GO" id="GO:0008320">
    <property type="term" value="F:protein transmembrane transporter activity"/>
    <property type="evidence" value="ECO:0000318"/>
    <property type="project" value="GO_Central"/>
</dbReference>
<dbReference type="GO" id="GO:0005048">
    <property type="term" value="F:signal sequence binding"/>
    <property type="evidence" value="ECO:0000318"/>
    <property type="project" value="GO_Central"/>
</dbReference>
<dbReference type="GO" id="GO:0043952">
    <property type="term" value="P:protein transport by the Sec complex"/>
    <property type="evidence" value="ECO:0007669"/>
    <property type="project" value="UniProtKB-UniRule"/>
</dbReference>
<dbReference type="GO" id="GO:0006616">
    <property type="term" value="P:SRP-dependent cotranslational protein targeting to membrane, translocation"/>
    <property type="evidence" value="ECO:0000318"/>
    <property type="project" value="GO_Central"/>
</dbReference>
<dbReference type="FunFam" id="1.10.3370.10:FF:000001">
    <property type="entry name" value="Preprotein translocase subunit SecY"/>
    <property type="match status" value="1"/>
</dbReference>
<dbReference type="Gene3D" id="1.10.3370.10">
    <property type="entry name" value="SecY subunit domain"/>
    <property type="match status" value="1"/>
</dbReference>
<dbReference type="HAMAP" id="MF_01465">
    <property type="entry name" value="SecY"/>
    <property type="match status" value="1"/>
</dbReference>
<dbReference type="InterPro" id="IPR026593">
    <property type="entry name" value="SecY"/>
</dbReference>
<dbReference type="InterPro" id="IPR002208">
    <property type="entry name" value="SecY/SEC61-alpha"/>
</dbReference>
<dbReference type="InterPro" id="IPR030659">
    <property type="entry name" value="SecY_CS"/>
</dbReference>
<dbReference type="InterPro" id="IPR023201">
    <property type="entry name" value="SecY_dom_sf"/>
</dbReference>
<dbReference type="NCBIfam" id="TIGR00967">
    <property type="entry name" value="3a0501s007"/>
    <property type="match status" value="1"/>
</dbReference>
<dbReference type="PANTHER" id="PTHR10906">
    <property type="entry name" value="SECY/SEC61-ALPHA FAMILY MEMBER"/>
    <property type="match status" value="1"/>
</dbReference>
<dbReference type="Pfam" id="PF00344">
    <property type="entry name" value="SecY"/>
    <property type="match status" value="1"/>
</dbReference>
<dbReference type="PIRSF" id="PIRSF004557">
    <property type="entry name" value="SecY"/>
    <property type="match status" value="1"/>
</dbReference>
<dbReference type="PRINTS" id="PR00303">
    <property type="entry name" value="SECYTRNLCASE"/>
</dbReference>
<dbReference type="SUPFAM" id="SSF103491">
    <property type="entry name" value="Preprotein translocase SecY subunit"/>
    <property type="match status" value="1"/>
</dbReference>
<dbReference type="PROSITE" id="PS00755">
    <property type="entry name" value="SECY_1"/>
    <property type="match status" value="1"/>
</dbReference>
<dbReference type="PROSITE" id="PS00756">
    <property type="entry name" value="SECY_2"/>
    <property type="match status" value="1"/>
</dbReference>
<organism>
    <name type="scientific">Staphylococcus aureus (strain NCTC 8325 / PS 47)</name>
    <dbReference type="NCBI Taxonomy" id="93061"/>
    <lineage>
        <taxon>Bacteria</taxon>
        <taxon>Bacillati</taxon>
        <taxon>Bacillota</taxon>
        <taxon>Bacilli</taxon>
        <taxon>Bacillales</taxon>
        <taxon>Staphylococcaceae</taxon>
        <taxon>Staphylococcus</taxon>
    </lineage>
</organism>
<protein>
    <recommendedName>
        <fullName evidence="1">Protein translocase subunit SecY</fullName>
    </recommendedName>
</protein>
<gene>
    <name evidence="1" type="primary">secY</name>
    <name type="ordered locus">SAOUHSC_02491</name>
</gene>
<name>SECY_STAA8</name>
<feature type="chain" id="PRO_0000131745" description="Protein translocase subunit SecY">
    <location>
        <begin position="1"/>
        <end position="430"/>
    </location>
</feature>
<feature type="transmembrane region" description="Helical" evidence="1">
    <location>
        <begin position="18"/>
        <end position="38"/>
    </location>
</feature>
<feature type="transmembrane region" description="Helical" evidence="1">
    <location>
        <begin position="68"/>
        <end position="88"/>
    </location>
</feature>
<feature type="transmembrane region" description="Helical" evidence="1">
    <location>
        <begin position="117"/>
        <end position="137"/>
    </location>
</feature>
<feature type="transmembrane region" description="Helical" evidence="1">
    <location>
        <begin position="147"/>
        <end position="167"/>
    </location>
</feature>
<feature type="transmembrane region" description="Helical" evidence="1">
    <location>
        <begin position="179"/>
        <end position="199"/>
    </location>
</feature>
<feature type="transmembrane region" description="Helical" evidence="1">
    <location>
        <begin position="217"/>
        <end position="237"/>
    </location>
</feature>
<feature type="transmembrane region" description="Helical" evidence="1">
    <location>
        <begin position="269"/>
        <end position="289"/>
    </location>
</feature>
<feature type="transmembrane region" description="Helical" evidence="1">
    <location>
        <begin position="308"/>
        <end position="328"/>
    </location>
</feature>
<feature type="transmembrane region" description="Helical" evidence="1">
    <location>
        <begin position="368"/>
        <end position="388"/>
    </location>
</feature>
<feature type="transmembrane region" description="Helical" evidence="1">
    <location>
        <begin position="389"/>
        <end position="409"/>
    </location>
</feature>
<feature type="sequence conflict" description="In Ref. 1; AAB54022." evidence="2" ref="1">
    <original>A</original>
    <variation>T</variation>
    <location>
        <position position="159"/>
    </location>
</feature>
<feature type="sequence conflict" description="In Ref. 1; AAB54022." evidence="2" ref="1">
    <original>GQT</original>
    <variation>YQQ</variation>
    <location>
        <begin position="200"/>
        <end position="202"/>
    </location>
</feature>
<proteinExistence type="inferred from homology"/>
<accession>O08387</accession>
<accession>Q2FW26</accession>
<evidence type="ECO:0000255" key="1">
    <source>
        <dbReference type="HAMAP-Rule" id="MF_01465"/>
    </source>
</evidence>
<evidence type="ECO:0000305" key="2"/>
<keyword id="KW-1003">Cell membrane</keyword>
<keyword id="KW-0472">Membrane</keyword>
<keyword id="KW-0653">Protein transport</keyword>
<keyword id="KW-1185">Reference proteome</keyword>
<keyword id="KW-0811">Translocation</keyword>
<keyword id="KW-0812">Transmembrane</keyword>
<keyword id="KW-1133">Transmembrane helix</keyword>
<keyword id="KW-0813">Transport</keyword>
<reference key="1">
    <citation type="submission" date="1997-04" db="EMBL/GenBank/DDBJ databases">
        <authorList>
            <person name="Segarra R.A."/>
            <person name="Iandolo J.J."/>
        </authorList>
    </citation>
    <scope>NUCLEOTIDE SEQUENCE [GENOMIC DNA]</scope>
    <source>
        <strain>NCTC 8325 / PS 47</strain>
    </source>
</reference>
<reference key="2">
    <citation type="book" date="2006" name="Gram positive pathogens, 2nd edition">
        <title>The Staphylococcus aureus NCTC 8325 genome.</title>
        <editorList>
            <person name="Fischetti V."/>
            <person name="Novick R."/>
            <person name="Ferretti J."/>
            <person name="Portnoy D."/>
            <person name="Rood J."/>
        </editorList>
        <authorList>
            <person name="Gillaspy A.F."/>
            <person name="Worrell V."/>
            <person name="Orvis J."/>
            <person name="Roe B.A."/>
            <person name="Dyer D.W."/>
            <person name="Iandolo J.J."/>
        </authorList>
    </citation>
    <scope>NUCLEOTIDE SEQUENCE [LARGE SCALE GENOMIC DNA]</scope>
    <source>
        <strain>NCTC 8325 / PS 47</strain>
    </source>
</reference>